<accession>A9KFQ0</accession>
<gene>
    <name evidence="1" type="primary">infA</name>
    <name type="ordered locus">CBUD_1285</name>
</gene>
<keyword id="KW-0963">Cytoplasm</keyword>
<keyword id="KW-0396">Initiation factor</keyword>
<keyword id="KW-0648">Protein biosynthesis</keyword>
<keyword id="KW-0694">RNA-binding</keyword>
<keyword id="KW-0699">rRNA-binding</keyword>
<protein>
    <recommendedName>
        <fullName evidence="1">Translation initiation factor IF-1</fullName>
    </recommendedName>
</protein>
<reference key="1">
    <citation type="journal article" date="2009" name="Infect. Immun.">
        <title>Comparative genomics reveal extensive transposon-mediated genomic plasticity and diversity among potential effector proteins within the genus Coxiella.</title>
        <authorList>
            <person name="Beare P.A."/>
            <person name="Unsworth N."/>
            <person name="Andoh M."/>
            <person name="Voth D.E."/>
            <person name="Omsland A."/>
            <person name="Gilk S.D."/>
            <person name="Williams K.P."/>
            <person name="Sobral B.W."/>
            <person name="Kupko J.J. III"/>
            <person name="Porcella S.F."/>
            <person name="Samuel J.E."/>
            <person name="Heinzen R.A."/>
        </authorList>
    </citation>
    <scope>NUCLEOTIDE SEQUENCE [LARGE SCALE GENOMIC DNA]</scope>
    <source>
        <strain>Dugway 5J108-111</strain>
    </source>
</reference>
<sequence length="83" mass="9326">MAKEESIEMQGTVVDSLPNTTFRVKLENGHVVTAHISGRMRKHYIRILTGDAVTVELTPYDLTRGRIVYREAGKKPPTSKAEE</sequence>
<name>IF1_COXBN</name>
<proteinExistence type="inferred from homology"/>
<evidence type="ECO:0000255" key="1">
    <source>
        <dbReference type="HAMAP-Rule" id="MF_00075"/>
    </source>
</evidence>
<feature type="chain" id="PRO_0000338811" description="Translation initiation factor IF-1">
    <location>
        <begin position="1"/>
        <end position="83"/>
    </location>
</feature>
<feature type="domain" description="S1-like" evidence="1">
    <location>
        <begin position="1"/>
        <end position="72"/>
    </location>
</feature>
<comment type="function">
    <text evidence="1">One of the essential components for the initiation of protein synthesis. Stabilizes the binding of IF-2 and IF-3 on the 30S subunit to which N-formylmethionyl-tRNA(fMet) subsequently binds. Helps modulate mRNA selection, yielding the 30S pre-initiation complex (PIC). Upon addition of the 50S ribosomal subunit IF-1, IF-2 and IF-3 are released leaving the mature 70S translation initiation complex.</text>
</comment>
<comment type="subunit">
    <text evidence="1">Component of the 30S ribosomal translation pre-initiation complex which assembles on the 30S ribosome in the order IF-2 and IF-3, IF-1 and N-formylmethionyl-tRNA(fMet); mRNA recruitment can occur at any time during PIC assembly.</text>
</comment>
<comment type="subcellular location">
    <subcellularLocation>
        <location evidence="1">Cytoplasm</location>
    </subcellularLocation>
</comment>
<comment type="similarity">
    <text evidence="1">Belongs to the IF-1 family.</text>
</comment>
<organism>
    <name type="scientific">Coxiella burnetii (strain Dugway 5J108-111)</name>
    <dbReference type="NCBI Taxonomy" id="434922"/>
    <lineage>
        <taxon>Bacteria</taxon>
        <taxon>Pseudomonadati</taxon>
        <taxon>Pseudomonadota</taxon>
        <taxon>Gammaproteobacteria</taxon>
        <taxon>Legionellales</taxon>
        <taxon>Coxiellaceae</taxon>
        <taxon>Coxiella</taxon>
    </lineage>
</organism>
<dbReference type="EMBL" id="CP000733">
    <property type="protein sequence ID" value="ABS76614.1"/>
    <property type="molecule type" value="Genomic_DNA"/>
</dbReference>
<dbReference type="RefSeq" id="WP_005770719.1">
    <property type="nucleotide sequence ID" value="NC_009727.1"/>
</dbReference>
<dbReference type="SMR" id="A9KFQ0"/>
<dbReference type="KEGG" id="cbd:CBUD_1285"/>
<dbReference type="HOGENOM" id="CLU_151267_1_0_6"/>
<dbReference type="Proteomes" id="UP000008555">
    <property type="component" value="Chromosome"/>
</dbReference>
<dbReference type="GO" id="GO:0005829">
    <property type="term" value="C:cytosol"/>
    <property type="evidence" value="ECO:0007669"/>
    <property type="project" value="TreeGrafter"/>
</dbReference>
<dbReference type="GO" id="GO:0043022">
    <property type="term" value="F:ribosome binding"/>
    <property type="evidence" value="ECO:0007669"/>
    <property type="project" value="UniProtKB-UniRule"/>
</dbReference>
<dbReference type="GO" id="GO:0019843">
    <property type="term" value="F:rRNA binding"/>
    <property type="evidence" value="ECO:0007669"/>
    <property type="project" value="UniProtKB-UniRule"/>
</dbReference>
<dbReference type="GO" id="GO:0003743">
    <property type="term" value="F:translation initiation factor activity"/>
    <property type="evidence" value="ECO:0007669"/>
    <property type="project" value="UniProtKB-UniRule"/>
</dbReference>
<dbReference type="CDD" id="cd04451">
    <property type="entry name" value="S1_IF1"/>
    <property type="match status" value="1"/>
</dbReference>
<dbReference type="FunFam" id="2.40.50.140:FF:000002">
    <property type="entry name" value="Translation initiation factor IF-1"/>
    <property type="match status" value="1"/>
</dbReference>
<dbReference type="Gene3D" id="2.40.50.140">
    <property type="entry name" value="Nucleic acid-binding proteins"/>
    <property type="match status" value="1"/>
</dbReference>
<dbReference type="HAMAP" id="MF_00075">
    <property type="entry name" value="IF_1"/>
    <property type="match status" value="1"/>
</dbReference>
<dbReference type="InterPro" id="IPR012340">
    <property type="entry name" value="NA-bd_OB-fold"/>
</dbReference>
<dbReference type="InterPro" id="IPR006196">
    <property type="entry name" value="RNA-binding_domain_S1_IF1"/>
</dbReference>
<dbReference type="InterPro" id="IPR003029">
    <property type="entry name" value="S1_domain"/>
</dbReference>
<dbReference type="InterPro" id="IPR004368">
    <property type="entry name" value="TIF_IF1"/>
</dbReference>
<dbReference type="NCBIfam" id="TIGR00008">
    <property type="entry name" value="infA"/>
    <property type="match status" value="1"/>
</dbReference>
<dbReference type="PANTHER" id="PTHR33370">
    <property type="entry name" value="TRANSLATION INITIATION FACTOR IF-1, CHLOROPLASTIC"/>
    <property type="match status" value="1"/>
</dbReference>
<dbReference type="PANTHER" id="PTHR33370:SF1">
    <property type="entry name" value="TRANSLATION INITIATION FACTOR IF-1, CHLOROPLASTIC"/>
    <property type="match status" value="1"/>
</dbReference>
<dbReference type="Pfam" id="PF01176">
    <property type="entry name" value="eIF-1a"/>
    <property type="match status" value="1"/>
</dbReference>
<dbReference type="SMART" id="SM00316">
    <property type="entry name" value="S1"/>
    <property type="match status" value="1"/>
</dbReference>
<dbReference type="SUPFAM" id="SSF50249">
    <property type="entry name" value="Nucleic acid-binding proteins"/>
    <property type="match status" value="1"/>
</dbReference>
<dbReference type="PROSITE" id="PS50832">
    <property type="entry name" value="S1_IF1_TYPE"/>
    <property type="match status" value="1"/>
</dbReference>